<dbReference type="EC" id="1.1.1.35"/>
<dbReference type="EMBL" id="Z46240">
    <property type="protein sequence ID" value="CAA86312.1"/>
    <property type="molecule type" value="Genomic_DNA"/>
</dbReference>
<dbReference type="PIR" id="T18685">
    <property type="entry name" value="T18685"/>
</dbReference>
<dbReference type="RefSeq" id="NP_509584.1">
    <property type="nucleotide sequence ID" value="NM_077183.8"/>
</dbReference>
<dbReference type="SMR" id="P41938"/>
<dbReference type="BioGRID" id="46085">
    <property type="interactions" value="5"/>
</dbReference>
<dbReference type="FunCoup" id="P41938">
    <property type="interactions" value="1628"/>
</dbReference>
<dbReference type="STRING" id="6239.B0272.3.1"/>
<dbReference type="iPTMnet" id="P41938"/>
<dbReference type="PaxDb" id="6239-B0272.3"/>
<dbReference type="PeptideAtlas" id="P41938"/>
<dbReference type="EnsemblMetazoa" id="B0272.3.1">
    <property type="protein sequence ID" value="B0272.3.1"/>
    <property type="gene ID" value="WBGene00007129"/>
</dbReference>
<dbReference type="GeneID" id="181169"/>
<dbReference type="KEGG" id="cel:CELE_B0272.3"/>
<dbReference type="UCSC" id="B0272.3">
    <property type="organism name" value="c. elegans"/>
</dbReference>
<dbReference type="AGR" id="WB:WBGene00007129"/>
<dbReference type="CTD" id="181169"/>
<dbReference type="WormBase" id="B0272.3">
    <property type="protein sequence ID" value="CE00852"/>
    <property type="gene ID" value="WBGene00007129"/>
</dbReference>
<dbReference type="eggNOG" id="KOG2304">
    <property type="taxonomic scope" value="Eukaryota"/>
</dbReference>
<dbReference type="GeneTree" id="ENSGT00940000166803"/>
<dbReference type="HOGENOM" id="CLU_009834_2_0_1"/>
<dbReference type="InParanoid" id="P41938"/>
<dbReference type="OMA" id="MAHPMGP"/>
<dbReference type="OrthoDB" id="5958943at2759"/>
<dbReference type="PhylomeDB" id="P41938"/>
<dbReference type="Reactome" id="R-CEL-77310">
    <property type="pathway name" value="Beta oxidation of lauroyl-CoA to decanoyl-CoA-CoA"/>
</dbReference>
<dbReference type="Reactome" id="R-CEL-77346">
    <property type="pathway name" value="Beta oxidation of decanoyl-CoA to octanoyl-CoA-CoA"/>
</dbReference>
<dbReference type="Reactome" id="R-CEL-77348">
    <property type="pathway name" value="Beta oxidation of octanoyl-CoA to hexanoyl-CoA"/>
</dbReference>
<dbReference type="Reactome" id="R-CEL-77350">
    <property type="pathway name" value="Beta oxidation of hexanoyl-CoA to butanoyl-CoA"/>
</dbReference>
<dbReference type="Reactome" id="R-CEL-77352">
    <property type="pathway name" value="Beta oxidation of butanoyl-CoA to acetyl-CoA"/>
</dbReference>
<dbReference type="Reactome" id="R-CEL-9837999">
    <property type="pathway name" value="Mitochondrial protein degradation"/>
</dbReference>
<dbReference type="UniPathway" id="UPA00659"/>
<dbReference type="PRO" id="PR:P41938"/>
<dbReference type="Proteomes" id="UP000001940">
    <property type="component" value="Chromosome X"/>
</dbReference>
<dbReference type="Bgee" id="WBGene00007129">
    <property type="expression patterns" value="Expressed in larva and 4 other cell types or tissues"/>
</dbReference>
<dbReference type="GO" id="GO:0005759">
    <property type="term" value="C:mitochondrial matrix"/>
    <property type="evidence" value="ECO:0007669"/>
    <property type="project" value="UniProtKB-SubCell"/>
</dbReference>
<dbReference type="GO" id="GO:0005739">
    <property type="term" value="C:mitochondrion"/>
    <property type="evidence" value="ECO:0000318"/>
    <property type="project" value="GO_Central"/>
</dbReference>
<dbReference type="GO" id="GO:0003857">
    <property type="term" value="F:3-hydroxyacyl-CoA dehydrogenase activity"/>
    <property type="evidence" value="ECO:0000318"/>
    <property type="project" value="GO_Central"/>
</dbReference>
<dbReference type="GO" id="GO:0070403">
    <property type="term" value="F:NAD+ binding"/>
    <property type="evidence" value="ECO:0007669"/>
    <property type="project" value="InterPro"/>
</dbReference>
<dbReference type="GO" id="GO:0006635">
    <property type="term" value="P:fatty acid beta-oxidation"/>
    <property type="evidence" value="ECO:0000318"/>
    <property type="project" value="GO_Central"/>
</dbReference>
<dbReference type="FunFam" id="1.10.1040.10:FF:000019">
    <property type="entry name" value="3-hydroxybutyryl-CoA dehydrogenase FadB2"/>
    <property type="match status" value="1"/>
</dbReference>
<dbReference type="FunFam" id="3.40.50.720:FF:000009">
    <property type="entry name" value="Fatty oxidation complex, alpha subunit"/>
    <property type="match status" value="1"/>
</dbReference>
<dbReference type="Gene3D" id="1.10.1040.10">
    <property type="entry name" value="N-(1-d-carboxylethyl)-l-norvaline Dehydrogenase, domain 2"/>
    <property type="match status" value="1"/>
</dbReference>
<dbReference type="Gene3D" id="3.40.50.720">
    <property type="entry name" value="NAD(P)-binding Rossmann-like Domain"/>
    <property type="match status" value="1"/>
</dbReference>
<dbReference type="InterPro" id="IPR022694">
    <property type="entry name" value="3-OHacyl-CoA_DH"/>
</dbReference>
<dbReference type="InterPro" id="IPR006180">
    <property type="entry name" value="3-OHacyl-CoA_DH_CS"/>
</dbReference>
<dbReference type="InterPro" id="IPR006176">
    <property type="entry name" value="3-OHacyl-CoA_DH_NAD-bd"/>
</dbReference>
<dbReference type="InterPro" id="IPR006108">
    <property type="entry name" value="3HC_DH_C"/>
</dbReference>
<dbReference type="InterPro" id="IPR008927">
    <property type="entry name" value="6-PGluconate_DH-like_C_sf"/>
</dbReference>
<dbReference type="InterPro" id="IPR013328">
    <property type="entry name" value="6PGD_dom2"/>
</dbReference>
<dbReference type="InterPro" id="IPR052242">
    <property type="entry name" value="Mito_3-hydroxyacyl-CoA_DH"/>
</dbReference>
<dbReference type="InterPro" id="IPR036291">
    <property type="entry name" value="NAD(P)-bd_dom_sf"/>
</dbReference>
<dbReference type="PANTHER" id="PTHR43561">
    <property type="match status" value="1"/>
</dbReference>
<dbReference type="PANTHER" id="PTHR43561:SF3">
    <property type="entry name" value="HYDROXYACYL-COENZYME A DEHYDROGENASE, MITOCHONDRIAL"/>
    <property type="match status" value="1"/>
</dbReference>
<dbReference type="Pfam" id="PF00725">
    <property type="entry name" value="3HCDH"/>
    <property type="match status" value="1"/>
</dbReference>
<dbReference type="Pfam" id="PF02737">
    <property type="entry name" value="3HCDH_N"/>
    <property type="match status" value="1"/>
</dbReference>
<dbReference type="PIRSF" id="PIRSF000105">
    <property type="entry name" value="HCDH"/>
    <property type="match status" value="1"/>
</dbReference>
<dbReference type="SUPFAM" id="SSF48179">
    <property type="entry name" value="6-phosphogluconate dehydrogenase C-terminal domain-like"/>
    <property type="match status" value="1"/>
</dbReference>
<dbReference type="SUPFAM" id="SSF51735">
    <property type="entry name" value="NAD(P)-binding Rossmann-fold domains"/>
    <property type="match status" value="1"/>
</dbReference>
<dbReference type="PROSITE" id="PS00067">
    <property type="entry name" value="3HCDH"/>
    <property type="match status" value="1"/>
</dbReference>
<feature type="chain" id="PRO_0000109254" description="Probable 3-hydroxyacyl-CoA dehydrogenase B0272.3">
    <location>
        <begin position="1"/>
        <end position="309"/>
    </location>
</feature>
<feature type="site" description="Important for catalytic activity" evidence="1">
    <location>
        <position position="165"/>
    </location>
</feature>
<proteinExistence type="inferred from homology"/>
<evidence type="ECO:0000250" key="1"/>
<evidence type="ECO:0000305" key="2"/>
<comment type="catalytic activity">
    <reaction>
        <text>a (3S)-3-hydroxyacyl-CoA + NAD(+) = a 3-oxoacyl-CoA + NADH + H(+)</text>
        <dbReference type="Rhea" id="RHEA:22432"/>
        <dbReference type="ChEBI" id="CHEBI:15378"/>
        <dbReference type="ChEBI" id="CHEBI:57318"/>
        <dbReference type="ChEBI" id="CHEBI:57540"/>
        <dbReference type="ChEBI" id="CHEBI:57945"/>
        <dbReference type="ChEBI" id="CHEBI:90726"/>
        <dbReference type="EC" id="1.1.1.35"/>
    </reaction>
</comment>
<comment type="pathway">
    <text>Lipid metabolism; fatty acid beta-oxidation.</text>
</comment>
<comment type="subunit">
    <text evidence="1">Homodimer.</text>
</comment>
<comment type="subcellular location">
    <subcellularLocation>
        <location evidence="1">Mitochondrion matrix</location>
    </subcellularLocation>
</comment>
<comment type="similarity">
    <text evidence="2">Belongs to the 3-hydroxyacyl-CoA dehydrogenase family.</text>
</comment>
<protein>
    <recommendedName>
        <fullName>Probable 3-hydroxyacyl-CoA dehydrogenase B0272.3</fullName>
        <ecNumber>1.1.1.35</ecNumber>
    </recommendedName>
</protein>
<keyword id="KW-0276">Fatty acid metabolism</keyword>
<keyword id="KW-0443">Lipid metabolism</keyword>
<keyword id="KW-0496">Mitochondrion</keyword>
<keyword id="KW-0520">NAD</keyword>
<keyword id="KW-0560">Oxidoreductase</keyword>
<keyword id="KW-1185">Reference proteome</keyword>
<name>HCDH2_CAEEL</name>
<sequence>MLSSTCTAAVRGLSTTAQLSKINNVTIIGAGLMGSGIAQVSANAKLNVTVVDSNQSALEKAQQGIANSLKRVAKKKHADDAAAQTALVSSVLDRIKMSTNVSDSVKDADLVIEAIVENIDIKRKLFAEVEVAAKPTTLITTNTSSLRLADIGLNLKDKSRFGGLHFFNPVPMMKLLEVVRHTETSDATFNQLVDYGKTVGKTTVACKDTPGFIVNRLLVPYMFEALRLYERGDASMEDIDVAMKLGAGYPMGPFELSDYVGLDTCKFIMDGWHAQYPEEVAFTPSPLLNSLVDSGKNGRKSGEGFYKYK</sequence>
<accession>P41938</accession>
<organism>
    <name type="scientific">Caenorhabditis elegans</name>
    <dbReference type="NCBI Taxonomy" id="6239"/>
    <lineage>
        <taxon>Eukaryota</taxon>
        <taxon>Metazoa</taxon>
        <taxon>Ecdysozoa</taxon>
        <taxon>Nematoda</taxon>
        <taxon>Chromadorea</taxon>
        <taxon>Rhabditida</taxon>
        <taxon>Rhabditina</taxon>
        <taxon>Rhabditomorpha</taxon>
        <taxon>Rhabditoidea</taxon>
        <taxon>Rhabditidae</taxon>
        <taxon>Peloderinae</taxon>
        <taxon>Caenorhabditis</taxon>
    </lineage>
</organism>
<gene>
    <name type="ORF">B0272.3</name>
</gene>
<reference key="1">
    <citation type="journal article" date="1998" name="Science">
        <title>Genome sequence of the nematode C. elegans: a platform for investigating biology.</title>
        <authorList>
            <consortium name="The C. elegans sequencing consortium"/>
        </authorList>
    </citation>
    <scope>NUCLEOTIDE SEQUENCE [LARGE SCALE GENOMIC DNA]</scope>
    <source>
        <strain>Bristol N2</strain>
    </source>
</reference>